<proteinExistence type="inferred from homology"/>
<dbReference type="EMBL" id="CP000438">
    <property type="protein sequence ID" value="ABJ11967.1"/>
    <property type="molecule type" value="Genomic_DNA"/>
</dbReference>
<dbReference type="RefSeq" id="WP_003099086.1">
    <property type="nucleotide sequence ID" value="NZ_CP034244.1"/>
</dbReference>
<dbReference type="SMR" id="Q02NN8"/>
<dbReference type="GeneID" id="79913049"/>
<dbReference type="KEGG" id="pau:PA14_28680"/>
<dbReference type="PseudoCAP" id="PA14_28680"/>
<dbReference type="HOGENOM" id="CLU_123265_0_1_6"/>
<dbReference type="BioCyc" id="PAER208963:G1G74-2399-MONOMER"/>
<dbReference type="Proteomes" id="UP000000653">
    <property type="component" value="Chromosome"/>
</dbReference>
<dbReference type="GO" id="GO:1990904">
    <property type="term" value="C:ribonucleoprotein complex"/>
    <property type="evidence" value="ECO:0007669"/>
    <property type="project" value="UniProtKB-KW"/>
</dbReference>
<dbReference type="GO" id="GO:0005840">
    <property type="term" value="C:ribosome"/>
    <property type="evidence" value="ECO:0007669"/>
    <property type="project" value="UniProtKB-KW"/>
</dbReference>
<dbReference type="GO" id="GO:0019843">
    <property type="term" value="F:rRNA binding"/>
    <property type="evidence" value="ECO:0007669"/>
    <property type="project" value="UniProtKB-UniRule"/>
</dbReference>
<dbReference type="GO" id="GO:0003735">
    <property type="term" value="F:structural constituent of ribosome"/>
    <property type="evidence" value="ECO:0007669"/>
    <property type="project" value="InterPro"/>
</dbReference>
<dbReference type="GO" id="GO:0000027">
    <property type="term" value="P:ribosomal large subunit assembly"/>
    <property type="evidence" value="ECO:0007669"/>
    <property type="project" value="UniProtKB-UniRule"/>
</dbReference>
<dbReference type="GO" id="GO:0006412">
    <property type="term" value="P:translation"/>
    <property type="evidence" value="ECO:0007669"/>
    <property type="project" value="InterPro"/>
</dbReference>
<dbReference type="CDD" id="cd07026">
    <property type="entry name" value="Ribosomal_L20"/>
    <property type="match status" value="1"/>
</dbReference>
<dbReference type="FunFam" id="1.10.1900.20:FF:000001">
    <property type="entry name" value="50S ribosomal protein L20"/>
    <property type="match status" value="1"/>
</dbReference>
<dbReference type="Gene3D" id="6.10.160.10">
    <property type="match status" value="1"/>
</dbReference>
<dbReference type="Gene3D" id="1.10.1900.20">
    <property type="entry name" value="Ribosomal protein L20"/>
    <property type="match status" value="1"/>
</dbReference>
<dbReference type="HAMAP" id="MF_00382">
    <property type="entry name" value="Ribosomal_bL20"/>
    <property type="match status" value="1"/>
</dbReference>
<dbReference type="InterPro" id="IPR005813">
    <property type="entry name" value="Ribosomal_bL20"/>
</dbReference>
<dbReference type="InterPro" id="IPR049946">
    <property type="entry name" value="RIBOSOMAL_L20_CS"/>
</dbReference>
<dbReference type="InterPro" id="IPR035566">
    <property type="entry name" value="Ribosomal_protein_bL20_C"/>
</dbReference>
<dbReference type="NCBIfam" id="TIGR01032">
    <property type="entry name" value="rplT_bact"/>
    <property type="match status" value="1"/>
</dbReference>
<dbReference type="PANTHER" id="PTHR10986">
    <property type="entry name" value="39S RIBOSOMAL PROTEIN L20"/>
    <property type="match status" value="1"/>
</dbReference>
<dbReference type="Pfam" id="PF00453">
    <property type="entry name" value="Ribosomal_L20"/>
    <property type="match status" value="1"/>
</dbReference>
<dbReference type="PRINTS" id="PR00062">
    <property type="entry name" value="RIBOSOMALL20"/>
</dbReference>
<dbReference type="SUPFAM" id="SSF74731">
    <property type="entry name" value="Ribosomal protein L20"/>
    <property type="match status" value="1"/>
</dbReference>
<dbReference type="PROSITE" id="PS00937">
    <property type="entry name" value="RIBOSOMAL_L20"/>
    <property type="match status" value="1"/>
</dbReference>
<gene>
    <name evidence="1" type="primary">rplT</name>
    <name type="ordered locus">PA14_28680</name>
</gene>
<comment type="function">
    <text evidence="1">Binds directly to 23S ribosomal RNA and is necessary for the in vitro assembly process of the 50S ribosomal subunit. It is not involved in the protein synthesizing functions of that subunit.</text>
</comment>
<comment type="similarity">
    <text evidence="1">Belongs to the bacterial ribosomal protein bL20 family.</text>
</comment>
<name>RL20_PSEAB</name>
<sequence length="118" mass="13365">MARVKRGVIARRRHKKILKLAKGYYGARSRVFRVAKQAVIKAGQYAYRDRRQRKRQFRALWIARINAGARQNGLSYSRLIAGLKKAAIEIDRKVLADLAVNEKAAFTAIVEKAKASLA</sequence>
<feature type="chain" id="PRO_1000049040" description="Large ribosomal subunit protein bL20">
    <location>
        <begin position="1"/>
        <end position="118"/>
    </location>
</feature>
<keyword id="KW-0687">Ribonucleoprotein</keyword>
<keyword id="KW-0689">Ribosomal protein</keyword>
<keyword id="KW-0694">RNA-binding</keyword>
<keyword id="KW-0699">rRNA-binding</keyword>
<accession>Q02NN8</accession>
<organism>
    <name type="scientific">Pseudomonas aeruginosa (strain UCBPP-PA14)</name>
    <dbReference type="NCBI Taxonomy" id="208963"/>
    <lineage>
        <taxon>Bacteria</taxon>
        <taxon>Pseudomonadati</taxon>
        <taxon>Pseudomonadota</taxon>
        <taxon>Gammaproteobacteria</taxon>
        <taxon>Pseudomonadales</taxon>
        <taxon>Pseudomonadaceae</taxon>
        <taxon>Pseudomonas</taxon>
    </lineage>
</organism>
<evidence type="ECO:0000255" key="1">
    <source>
        <dbReference type="HAMAP-Rule" id="MF_00382"/>
    </source>
</evidence>
<evidence type="ECO:0000305" key="2"/>
<reference key="1">
    <citation type="journal article" date="2006" name="Genome Biol.">
        <title>Genomic analysis reveals that Pseudomonas aeruginosa virulence is combinatorial.</title>
        <authorList>
            <person name="Lee D.G."/>
            <person name="Urbach J.M."/>
            <person name="Wu G."/>
            <person name="Liberati N.T."/>
            <person name="Feinbaum R.L."/>
            <person name="Miyata S."/>
            <person name="Diggins L.T."/>
            <person name="He J."/>
            <person name="Saucier M."/>
            <person name="Deziel E."/>
            <person name="Friedman L."/>
            <person name="Li L."/>
            <person name="Grills G."/>
            <person name="Montgomery K."/>
            <person name="Kucherlapati R."/>
            <person name="Rahme L.G."/>
            <person name="Ausubel F.M."/>
        </authorList>
    </citation>
    <scope>NUCLEOTIDE SEQUENCE [LARGE SCALE GENOMIC DNA]</scope>
    <source>
        <strain>UCBPP-PA14</strain>
    </source>
</reference>
<protein>
    <recommendedName>
        <fullName evidence="1">Large ribosomal subunit protein bL20</fullName>
    </recommendedName>
    <alternativeName>
        <fullName evidence="2">50S ribosomal protein L20</fullName>
    </alternativeName>
</protein>